<dbReference type="EMBL" id="CP000783">
    <property type="protein sequence ID" value="ABU78395.1"/>
    <property type="molecule type" value="Genomic_DNA"/>
</dbReference>
<dbReference type="RefSeq" id="WP_004386138.1">
    <property type="nucleotide sequence ID" value="NC_009778.1"/>
</dbReference>
<dbReference type="SMR" id="A7MGT1"/>
<dbReference type="GeneID" id="92807605"/>
<dbReference type="KEGG" id="esa:ESA_03172"/>
<dbReference type="HOGENOM" id="CLU_047155_0_2_6"/>
<dbReference type="Proteomes" id="UP000000260">
    <property type="component" value="Chromosome"/>
</dbReference>
<dbReference type="GO" id="GO:0005737">
    <property type="term" value="C:cytoplasm"/>
    <property type="evidence" value="ECO:0007669"/>
    <property type="project" value="UniProtKB-SubCell"/>
</dbReference>
<dbReference type="GO" id="GO:0003746">
    <property type="term" value="F:translation elongation factor activity"/>
    <property type="evidence" value="ECO:0007669"/>
    <property type="project" value="UniProtKB-UniRule"/>
</dbReference>
<dbReference type="CDD" id="cd14275">
    <property type="entry name" value="UBA_EF-Ts"/>
    <property type="match status" value="1"/>
</dbReference>
<dbReference type="FunFam" id="1.10.286.20:FF:000001">
    <property type="entry name" value="Elongation factor Ts"/>
    <property type="match status" value="1"/>
</dbReference>
<dbReference type="FunFam" id="1.10.8.10:FF:000001">
    <property type="entry name" value="Elongation factor Ts"/>
    <property type="match status" value="1"/>
</dbReference>
<dbReference type="FunFam" id="3.30.479.20:FF:000001">
    <property type="entry name" value="Elongation factor Ts"/>
    <property type="match status" value="1"/>
</dbReference>
<dbReference type="Gene3D" id="1.10.286.20">
    <property type="match status" value="1"/>
</dbReference>
<dbReference type="Gene3D" id="1.10.8.10">
    <property type="entry name" value="DNA helicase RuvA subunit, C-terminal domain"/>
    <property type="match status" value="1"/>
</dbReference>
<dbReference type="Gene3D" id="3.30.479.20">
    <property type="entry name" value="Elongation factor Ts, dimerisation domain"/>
    <property type="match status" value="2"/>
</dbReference>
<dbReference type="HAMAP" id="MF_00050">
    <property type="entry name" value="EF_Ts"/>
    <property type="match status" value="1"/>
</dbReference>
<dbReference type="InterPro" id="IPR036402">
    <property type="entry name" value="EF-Ts_dimer_sf"/>
</dbReference>
<dbReference type="InterPro" id="IPR001816">
    <property type="entry name" value="Transl_elong_EFTs/EF1B"/>
</dbReference>
<dbReference type="InterPro" id="IPR014039">
    <property type="entry name" value="Transl_elong_EFTs/EF1B_dimer"/>
</dbReference>
<dbReference type="InterPro" id="IPR018101">
    <property type="entry name" value="Transl_elong_Ts_CS"/>
</dbReference>
<dbReference type="InterPro" id="IPR009060">
    <property type="entry name" value="UBA-like_sf"/>
</dbReference>
<dbReference type="NCBIfam" id="TIGR00116">
    <property type="entry name" value="tsf"/>
    <property type="match status" value="1"/>
</dbReference>
<dbReference type="PANTHER" id="PTHR11741">
    <property type="entry name" value="ELONGATION FACTOR TS"/>
    <property type="match status" value="1"/>
</dbReference>
<dbReference type="PANTHER" id="PTHR11741:SF0">
    <property type="entry name" value="ELONGATION FACTOR TS, MITOCHONDRIAL"/>
    <property type="match status" value="1"/>
</dbReference>
<dbReference type="Pfam" id="PF00889">
    <property type="entry name" value="EF_TS"/>
    <property type="match status" value="1"/>
</dbReference>
<dbReference type="SUPFAM" id="SSF54713">
    <property type="entry name" value="Elongation factor Ts (EF-Ts), dimerisation domain"/>
    <property type="match status" value="2"/>
</dbReference>
<dbReference type="SUPFAM" id="SSF46934">
    <property type="entry name" value="UBA-like"/>
    <property type="match status" value="1"/>
</dbReference>
<dbReference type="PROSITE" id="PS01126">
    <property type="entry name" value="EF_TS_1"/>
    <property type="match status" value="1"/>
</dbReference>
<dbReference type="PROSITE" id="PS01127">
    <property type="entry name" value="EF_TS_2"/>
    <property type="match status" value="1"/>
</dbReference>
<sequence>MAEITASLVKELRERTGAGMMECKKALVEANGDIELAIENMRKSGAIKAAKKAGNVAADGVIKTKIEGNYGVILEVNCQTDFVAKDGGFQAFADKVLDAAFAGKITDVEALKAQFEEERVALVAKIGENINIRRIASLEGDVLASYLHGARIGVLVAAKNADEELVKQLAMHVAASKPEFVKPEDVSADVVEKEYQVQLDIAMQSGKPKEIAEKMVEGRMKKFTGEVSLTGQPFVMDPSKTVAQLLKEHNADVTNFIRFEVGEGIQKVETDFAAEVAAMSRQS</sequence>
<feature type="chain" id="PRO_1000006090" description="Elongation factor Ts">
    <location>
        <begin position="1"/>
        <end position="283"/>
    </location>
</feature>
<feature type="region of interest" description="Involved in Mg(2+) ion dislocation from EF-Tu" evidence="1">
    <location>
        <begin position="80"/>
        <end position="83"/>
    </location>
</feature>
<comment type="function">
    <text evidence="1">Associates with the EF-Tu.GDP complex and induces the exchange of GDP to GTP. It remains bound to the aminoacyl-tRNA.EF-Tu.GTP complex up to the GTP hydrolysis stage on the ribosome.</text>
</comment>
<comment type="subcellular location">
    <subcellularLocation>
        <location evidence="1">Cytoplasm</location>
    </subcellularLocation>
</comment>
<comment type="similarity">
    <text evidence="1">Belongs to the EF-Ts family.</text>
</comment>
<reference key="1">
    <citation type="journal article" date="2010" name="PLoS ONE">
        <title>Genome sequence of Cronobacter sakazakii BAA-894 and comparative genomic hybridization analysis with other Cronobacter species.</title>
        <authorList>
            <person name="Kucerova E."/>
            <person name="Clifton S.W."/>
            <person name="Xia X.Q."/>
            <person name="Long F."/>
            <person name="Porwollik S."/>
            <person name="Fulton L."/>
            <person name="Fronick C."/>
            <person name="Minx P."/>
            <person name="Kyung K."/>
            <person name="Warren W."/>
            <person name="Fulton R."/>
            <person name="Feng D."/>
            <person name="Wollam A."/>
            <person name="Shah N."/>
            <person name="Bhonagiri V."/>
            <person name="Nash W.E."/>
            <person name="Hallsworth-Pepin K."/>
            <person name="Wilson R.K."/>
            <person name="McClelland M."/>
            <person name="Forsythe S.J."/>
        </authorList>
    </citation>
    <scope>NUCLEOTIDE SEQUENCE [LARGE SCALE GENOMIC DNA]</scope>
    <source>
        <strain>ATCC BAA-894</strain>
    </source>
</reference>
<protein>
    <recommendedName>
        <fullName evidence="1">Elongation factor Ts</fullName>
        <shortName evidence="1">EF-Ts</shortName>
    </recommendedName>
</protein>
<accession>A7MGT1</accession>
<keyword id="KW-0963">Cytoplasm</keyword>
<keyword id="KW-0251">Elongation factor</keyword>
<keyword id="KW-0648">Protein biosynthesis</keyword>
<keyword id="KW-1185">Reference proteome</keyword>
<evidence type="ECO:0000255" key="1">
    <source>
        <dbReference type="HAMAP-Rule" id="MF_00050"/>
    </source>
</evidence>
<organism>
    <name type="scientific">Cronobacter sakazakii (strain ATCC BAA-894)</name>
    <name type="common">Enterobacter sakazakii</name>
    <dbReference type="NCBI Taxonomy" id="290339"/>
    <lineage>
        <taxon>Bacteria</taxon>
        <taxon>Pseudomonadati</taxon>
        <taxon>Pseudomonadota</taxon>
        <taxon>Gammaproteobacteria</taxon>
        <taxon>Enterobacterales</taxon>
        <taxon>Enterobacteriaceae</taxon>
        <taxon>Cronobacter</taxon>
    </lineage>
</organism>
<proteinExistence type="inferred from homology"/>
<name>EFTS_CROS8</name>
<gene>
    <name evidence="1" type="primary">tsf</name>
    <name type="ordered locus">ESA_03172</name>
</gene>